<dbReference type="EMBL" id="CR621082">
    <property type="status" value="NOT_ANNOTATED_CDS"/>
    <property type="molecule type" value="mRNA"/>
</dbReference>
<dbReference type="EMBL" id="AC005631">
    <property type="status" value="NOT_ANNOTATED_CDS"/>
    <property type="molecule type" value="Genomic_DNA"/>
</dbReference>
<dbReference type="SMR" id="A8MUU1"/>
<dbReference type="FunCoup" id="A8MUU1">
    <property type="interactions" value="15"/>
</dbReference>
<dbReference type="iPTMnet" id="A8MUU1"/>
<dbReference type="PhosphoSitePlus" id="A8MUU1"/>
<dbReference type="BioMuta" id="HGNC:22573"/>
<dbReference type="jPOST" id="A8MUU1"/>
<dbReference type="MassIVE" id="A8MUU1"/>
<dbReference type="ProteomicsDB" id="2131"/>
<dbReference type="AGR" id="HGNC:22573"/>
<dbReference type="GeneCards" id="FABP5P3"/>
<dbReference type="HGNC" id="HGNC:22573">
    <property type="gene designation" value="FABP5P3"/>
</dbReference>
<dbReference type="neXtProt" id="NX_A8MUU1"/>
<dbReference type="InParanoid" id="A8MUU1"/>
<dbReference type="PAN-GO" id="A8MUU1">
    <property type="GO annotations" value="4 GO annotations based on evolutionary models"/>
</dbReference>
<dbReference type="SignaLink" id="A8MUU1"/>
<dbReference type="ChiTaRS" id="FABP5P3">
    <property type="organism name" value="human"/>
</dbReference>
<dbReference type="Pharos" id="A8MUU1">
    <property type="development level" value="Tdark"/>
</dbReference>
<dbReference type="Proteomes" id="UP000005640">
    <property type="component" value="Unplaced"/>
</dbReference>
<dbReference type="RNAct" id="A8MUU1">
    <property type="molecule type" value="protein"/>
</dbReference>
<dbReference type="GO" id="GO:0005829">
    <property type="term" value="C:cytosol"/>
    <property type="evidence" value="ECO:0000318"/>
    <property type="project" value="GO_Central"/>
</dbReference>
<dbReference type="GO" id="GO:0005634">
    <property type="term" value="C:nucleus"/>
    <property type="evidence" value="ECO:0000318"/>
    <property type="project" value="GO_Central"/>
</dbReference>
<dbReference type="GO" id="GO:0005504">
    <property type="term" value="F:fatty acid binding"/>
    <property type="evidence" value="ECO:0000318"/>
    <property type="project" value="GO_Central"/>
</dbReference>
<dbReference type="GO" id="GO:0015908">
    <property type="term" value="P:fatty acid transport"/>
    <property type="evidence" value="ECO:0000318"/>
    <property type="project" value="GO_Central"/>
</dbReference>
<dbReference type="Gene3D" id="2.40.128.20">
    <property type="match status" value="1"/>
</dbReference>
<dbReference type="InterPro" id="IPR012674">
    <property type="entry name" value="Calycin"/>
</dbReference>
<dbReference type="InterPro" id="IPR000463">
    <property type="entry name" value="Fatty_acid-bd"/>
</dbReference>
<dbReference type="InterPro" id="IPR031259">
    <property type="entry name" value="ILBP"/>
</dbReference>
<dbReference type="InterPro" id="IPR000566">
    <property type="entry name" value="Lipocln_cytosolic_FA-bd_dom"/>
</dbReference>
<dbReference type="PANTHER" id="PTHR11955">
    <property type="entry name" value="FATTY ACID BINDING PROTEIN"/>
    <property type="match status" value="1"/>
</dbReference>
<dbReference type="Pfam" id="PF00061">
    <property type="entry name" value="Lipocalin"/>
    <property type="match status" value="1"/>
</dbReference>
<dbReference type="PRINTS" id="PR00178">
    <property type="entry name" value="FATTYACIDBP"/>
</dbReference>
<dbReference type="SUPFAM" id="SSF50814">
    <property type="entry name" value="Lipocalins"/>
    <property type="match status" value="1"/>
</dbReference>
<reference key="1">
    <citation type="submission" date="2004-07" db="EMBL/GenBank/DDBJ databases">
        <title>Full-length cDNA libraries and normalization.</title>
        <authorList>
            <person name="Li W.B."/>
            <person name="Gruber C."/>
            <person name="Jessee J."/>
            <person name="Polayes D."/>
        </authorList>
    </citation>
    <scope>NUCLEOTIDE SEQUENCE [LARGE SCALE MRNA]</scope>
    <source>
        <tissue>Placenta</tissue>
    </source>
</reference>
<reference key="2">
    <citation type="journal article" date="2003" name="Nature">
        <title>The DNA sequence of human chromosome 7.</title>
        <authorList>
            <person name="Hillier L.W."/>
            <person name="Fulton R.S."/>
            <person name="Fulton L.A."/>
            <person name="Graves T.A."/>
            <person name="Pepin K.H."/>
            <person name="Wagner-McPherson C."/>
            <person name="Layman D."/>
            <person name="Maas J."/>
            <person name="Jaeger S."/>
            <person name="Walker R."/>
            <person name="Wylie K."/>
            <person name="Sekhon M."/>
            <person name="Becker M.C."/>
            <person name="O'Laughlin M.D."/>
            <person name="Schaller M.E."/>
            <person name="Fewell G.A."/>
            <person name="Delehaunty K.D."/>
            <person name="Miner T.L."/>
            <person name="Nash W.E."/>
            <person name="Cordes M."/>
            <person name="Du H."/>
            <person name="Sun H."/>
            <person name="Edwards J."/>
            <person name="Bradshaw-Cordum H."/>
            <person name="Ali J."/>
            <person name="Andrews S."/>
            <person name="Isak A."/>
            <person name="Vanbrunt A."/>
            <person name="Nguyen C."/>
            <person name="Du F."/>
            <person name="Lamar B."/>
            <person name="Courtney L."/>
            <person name="Kalicki J."/>
            <person name="Ozersky P."/>
            <person name="Bielicki L."/>
            <person name="Scott K."/>
            <person name="Holmes A."/>
            <person name="Harkins R."/>
            <person name="Harris A."/>
            <person name="Strong C.M."/>
            <person name="Hou S."/>
            <person name="Tomlinson C."/>
            <person name="Dauphin-Kohlberg S."/>
            <person name="Kozlowicz-Reilly A."/>
            <person name="Leonard S."/>
            <person name="Rohlfing T."/>
            <person name="Rock S.M."/>
            <person name="Tin-Wollam A.-M."/>
            <person name="Abbott A."/>
            <person name="Minx P."/>
            <person name="Maupin R."/>
            <person name="Strowmatt C."/>
            <person name="Latreille P."/>
            <person name="Miller N."/>
            <person name="Johnson D."/>
            <person name="Murray J."/>
            <person name="Woessner J.P."/>
            <person name="Wendl M.C."/>
            <person name="Yang S.-P."/>
            <person name="Schultz B.R."/>
            <person name="Wallis J.W."/>
            <person name="Spieth J."/>
            <person name="Bieri T.A."/>
            <person name="Nelson J.O."/>
            <person name="Berkowicz N."/>
            <person name="Wohldmann P.E."/>
            <person name="Cook L.L."/>
            <person name="Hickenbotham M.T."/>
            <person name="Eldred J."/>
            <person name="Williams D."/>
            <person name="Bedell J.A."/>
            <person name="Mardis E.R."/>
            <person name="Clifton S.W."/>
            <person name="Chissoe S.L."/>
            <person name="Marra M.A."/>
            <person name="Raymond C."/>
            <person name="Haugen E."/>
            <person name="Gillett W."/>
            <person name="Zhou Y."/>
            <person name="James R."/>
            <person name="Phelps K."/>
            <person name="Iadanoto S."/>
            <person name="Bubb K."/>
            <person name="Simms E."/>
            <person name="Levy R."/>
            <person name="Clendenning J."/>
            <person name="Kaul R."/>
            <person name="Kent W.J."/>
            <person name="Furey T.S."/>
            <person name="Baertsch R.A."/>
            <person name="Brent M.R."/>
            <person name="Keibler E."/>
            <person name="Flicek P."/>
            <person name="Bork P."/>
            <person name="Suyama M."/>
            <person name="Bailey J.A."/>
            <person name="Portnoy M.E."/>
            <person name="Torrents D."/>
            <person name="Chinwalla A.T."/>
            <person name="Gish W.R."/>
            <person name="Eddy S.R."/>
            <person name="McPherson J.D."/>
            <person name="Olson M.V."/>
            <person name="Eichler E.E."/>
            <person name="Green E.D."/>
            <person name="Waterston R.H."/>
            <person name="Wilson R.K."/>
        </authorList>
    </citation>
    <scope>NUCLEOTIDE SEQUENCE [LARGE SCALE GENOMIC DNA]</scope>
</reference>
<protein>
    <recommendedName>
        <fullName>Putative fatty acid-binding protein 5-like protein 3</fullName>
    </recommendedName>
    <alternativeName>
        <fullName>Fatty acid-binding protein 5 pseudogene 3</fullName>
    </alternativeName>
</protein>
<accession>A8MUU1</accession>
<comment type="function">
    <text evidence="1">High specificity for fatty acids.</text>
</comment>
<comment type="domain">
    <text evidence="1">Forms a beta-barrel structure that accommodates the hydrophobic ligand in its interior.</text>
</comment>
<comment type="similarity">
    <text evidence="2">Belongs to the calycin superfamily. Fatty-acid binding protein (FABP) family.</text>
</comment>
<comment type="caution">
    <text evidence="2">Could be the product of a pseudogene.</text>
</comment>
<evidence type="ECO:0000250" key="1"/>
<evidence type="ECO:0000305" key="2"/>
<feature type="chain" id="PRO_0000347054" description="Putative fatty acid-binding protein 5-like protein 3">
    <location>
        <begin position="1"/>
        <end position="101"/>
    </location>
</feature>
<proteinExistence type="uncertain"/>
<keyword id="KW-0446">Lipid-binding</keyword>
<keyword id="KW-1267">Proteomics identification</keyword>
<keyword id="KW-1185">Reference proteome</keyword>
<keyword id="KW-0813">Transport</keyword>
<gene>
    <name type="primary">FABP5P3</name>
    <name type="synonym">FABP5L3</name>
</gene>
<organism>
    <name type="scientific">Homo sapiens</name>
    <name type="common">Human</name>
    <dbReference type="NCBI Taxonomy" id="9606"/>
    <lineage>
        <taxon>Eukaryota</taxon>
        <taxon>Metazoa</taxon>
        <taxon>Chordata</taxon>
        <taxon>Craniata</taxon>
        <taxon>Vertebrata</taxon>
        <taxon>Euteleostomi</taxon>
        <taxon>Mammalia</taxon>
        <taxon>Eutheria</taxon>
        <taxon>Euarchontoglires</taxon>
        <taxon>Primates</taxon>
        <taxon>Haplorrhini</taxon>
        <taxon>Catarrhini</taxon>
        <taxon>Hominidae</taxon>
        <taxon>Homo</taxon>
    </lineage>
</organism>
<name>FB5L3_HUMAN</name>
<sequence>MGAMAKPDCIITCDSKNLTIKTESTLKTTQFSGTLGEKFEENTADGRRTQTVCNFTDGALVQHQEWDGKESTITRKLKDGKLVVERVMNHVACTRIYEKAQ</sequence>